<organism>
    <name type="scientific">Enterobacter cloacae</name>
    <dbReference type="NCBI Taxonomy" id="550"/>
    <lineage>
        <taxon>Bacteria</taxon>
        <taxon>Pseudomonadati</taxon>
        <taxon>Pseudomonadota</taxon>
        <taxon>Gammaproteobacteria</taxon>
        <taxon>Enterobacterales</taxon>
        <taxon>Enterobacteriaceae</taxon>
        <taxon>Enterobacter</taxon>
        <taxon>Enterobacter cloacae complex</taxon>
    </lineage>
</organism>
<name>AMPD_ENTCL</name>
<proteinExistence type="inferred from homology"/>
<accession>P82973</accession>
<accession>Q00831</accession>
<gene>
    <name evidence="5" type="primary">ampD</name>
</gene>
<sequence>MLLENGWLVDARHVPSPHHDCRPEDEKPTLLVVHNISLPPGEFGGPWIDALFTGTIDPDAHPFFAEIAHLALSADCLIRRDGEVVQYVPFDKRAWHAGVSMYQGRERCNDFSIGIELEGTDTTPYTDAQYEKLVAVTQTLIGRYPAIADNITGHSDIAPERKTDPGPAFDWSRFHAMLTTSSDKEIT</sequence>
<dbReference type="EC" id="3.5.1.28" evidence="1"/>
<dbReference type="EMBL" id="Z14003">
    <property type="protein sequence ID" value="CAA78391.1"/>
    <property type="molecule type" value="Genomic_DNA"/>
</dbReference>
<dbReference type="PIR" id="A48901">
    <property type="entry name" value="A48901"/>
</dbReference>
<dbReference type="SMR" id="P82973"/>
<dbReference type="eggNOG" id="COG3023">
    <property type="taxonomic scope" value="Bacteria"/>
</dbReference>
<dbReference type="GO" id="GO:0005737">
    <property type="term" value="C:cytoplasm"/>
    <property type="evidence" value="ECO:0007669"/>
    <property type="project" value="UniProtKB-SubCell"/>
</dbReference>
<dbReference type="GO" id="GO:0046872">
    <property type="term" value="F:metal ion binding"/>
    <property type="evidence" value="ECO:0007669"/>
    <property type="project" value="UniProtKB-KW"/>
</dbReference>
<dbReference type="GO" id="GO:0008745">
    <property type="term" value="F:N-acetylmuramoyl-L-alanine amidase activity"/>
    <property type="evidence" value="ECO:0007669"/>
    <property type="project" value="UniProtKB-EC"/>
</dbReference>
<dbReference type="GO" id="GO:0071555">
    <property type="term" value="P:cell wall organization"/>
    <property type="evidence" value="ECO:0007669"/>
    <property type="project" value="UniProtKB-KW"/>
</dbReference>
<dbReference type="GO" id="GO:0009253">
    <property type="term" value="P:peptidoglycan catabolic process"/>
    <property type="evidence" value="ECO:0007669"/>
    <property type="project" value="InterPro"/>
</dbReference>
<dbReference type="GO" id="GO:0009254">
    <property type="term" value="P:peptidoglycan turnover"/>
    <property type="evidence" value="ECO:0007669"/>
    <property type="project" value="TreeGrafter"/>
</dbReference>
<dbReference type="CDD" id="cd06583">
    <property type="entry name" value="PGRP"/>
    <property type="match status" value="1"/>
</dbReference>
<dbReference type="FunFam" id="3.40.80.10:FF:000002">
    <property type="entry name" value="1,6-anhydro-N-acetylmuramyl-L-alanine amidase"/>
    <property type="match status" value="1"/>
</dbReference>
<dbReference type="Gene3D" id="3.40.80.10">
    <property type="entry name" value="Peptidoglycan recognition protein-like"/>
    <property type="match status" value="1"/>
</dbReference>
<dbReference type="InterPro" id="IPR036505">
    <property type="entry name" value="Amidase/PGRP_sf"/>
</dbReference>
<dbReference type="InterPro" id="IPR002502">
    <property type="entry name" value="Amidase_domain"/>
</dbReference>
<dbReference type="InterPro" id="IPR051206">
    <property type="entry name" value="NAMLAA_amidase_2"/>
</dbReference>
<dbReference type="NCBIfam" id="NF008758">
    <property type="entry name" value="PRK11789.1"/>
    <property type="match status" value="1"/>
</dbReference>
<dbReference type="PANTHER" id="PTHR30417:SF4">
    <property type="entry name" value="1,6-ANHYDRO-N-ACETYLMURAMYL-L-ALANINE AMIDASE AMPD"/>
    <property type="match status" value="1"/>
</dbReference>
<dbReference type="PANTHER" id="PTHR30417">
    <property type="entry name" value="N-ACETYLMURAMOYL-L-ALANINE AMIDASE AMID"/>
    <property type="match status" value="1"/>
</dbReference>
<dbReference type="Pfam" id="PF01510">
    <property type="entry name" value="Amidase_2"/>
    <property type="match status" value="1"/>
</dbReference>
<dbReference type="SMART" id="SM00644">
    <property type="entry name" value="Ami_2"/>
    <property type="match status" value="1"/>
</dbReference>
<dbReference type="SUPFAM" id="SSF55846">
    <property type="entry name" value="N-acetylmuramoyl-L-alanine amidase-like"/>
    <property type="match status" value="1"/>
</dbReference>
<keyword id="KW-0961">Cell wall biogenesis/degradation</keyword>
<keyword id="KW-0963">Cytoplasm</keyword>
<keyword id="KW-0378">Hydrolase</keyword>
<keyword id="KW-0479">Metal-binding</keyword>
<keyword id="KW-0862">Zinc</keyword>
<comment type="function">
    <text evidence="1">Involved in cell wall peptidoglycan recycling. Specifically cleaves the amide bond between the lactyl group of N-acetylmuramic acid and the alpha-amino group of the L-alanine in degradation products containing an anhydro N-acetylmuramyl moiety.</text>
</comment>
<comment type="catalytic activity">
    <reaction evidence="1">
        <text>Hydrolyzes the link between N-acetylmuramoyl residues and L-amino acid residues in certain cell-wall glycopeptides.</text>
        <dbReference type="EC" id="3.5.1.28"/>
    </reaction>
</comment>
<comment type="cofactor">
    <cofactor evidence="3">
        <name>Zn(2+)</name>
        <dbReference type="ChEBI" id="CHEBI:29105"/>
    </cofactor>
    <text evidence="3">Zn(2+) is required for amidase activity.</text>
</comment>
<comment type="subcellular location">
    <subcellularLocation>
        <location evidence="1">Cytoplasm</location>
    </subcellularLocation>
</comment>
<comment type="similarity">
    <text evidence="6">Belongs to the N-acetylmuramoyl-L-alanine amidase 2 family.</text>
</comment>
<protein>
    <recommendedName>
        <fullName evidence="1">1,6-anhydro-N-acetylmuramyl-L-alanine amidase AmpD</fullName>
        <ecNumber evidence="1">3.5.1.28</ecNumber>
    </recommendedName>
    <alternativeName>
        <fullName evidence="1">N-acetylmuramoyl-L-alanine amidase</fullName>
    </alternativeName>
</protein>
<reference key="1">
    <citation type="journal article" date="1993" name="Antimicrob. Agents Chemother.">
        <title>Sequences of wild-type and mutant ampD genes of Citrobacter freundii and Enterobacter cloacae.</title>
        <authorList>
            <person name="Kopp U."/>
            <person name="Wiedemann B."/>
            <person name="Lindquist S."/>
            <person name="Normark S."/>
        </authorList>
    </citation>
    <scope>NUCLEOTIDE SEQUENCE [GENOMIC DNA]</scope>
    <source>
        <strain>14</strain>
    </source>
</reference>
<evidence type="ECO:0000250" key="1">
    <source>
        <dbReference type="UniProtKB" id="P13016"/>
    </source>
</evidence>
<evidence type="ECO:0000250" key="2">
    <source>
        <dbReference type="UniProtKB" id="P75820"/>
    </source>
</evidence>
<evidence type="ECO:0000250" key="3">
    <source>
        <dbReference type="UniProtKB" id="P82974"/>
    </source>
</evidence>
<evidence type="ECO:0000255" key="4"/>
<evidence type="ECO:0000303" key="5">
    <source>
    </source>
</evidence>
<evidence type="ECO:0000305" key="6"/>
<feature type="chain" id="PRO_0000164412" description="1,6-anhydro-N-acetylmuramyl-L-alanine amidase AmpD">
    <location>
        <begin position="1"/>
        <end position="187"/>
    </location>
</feature>
<feature type="domain" description="N-acetylmuramoyl-L-alanine amidase" evidence="4">
    <location>
        <begin position="29"/>
        <end position="167"/>
    </location>
</feature>
<feature type="active site" description="Proton acceptor" evidence="2">
    <location>
        <position position="116"/>
    </location>
</feature>
<feature type="binding site" evidence="3">
    <location>
        <position position="34"/>
    </location>
    <ligand>
        <name>Zn(2+)</name>
        <dbReference type="ChEBI" id="CHEBI:29105"/>
        <note>catalytic</note>
    </ligand>
</feature>
<feature type="binding site" evidence="3">
    <location>
        <position position="154"/>
    </location>
    <ligand>
        <name>Zn(2+)</name>
        <dbReference type="ChEBI" id="CHEBI:29105"/>
        <note>catalytic</note>
    </ligand>
</feature>
<feature type="binding site" evidence="3">
    <location>
        <position position="164"/>
    </location>
    <ligand>
        <name>Zn(2+)</name>
        <dbReference type="ChEBI" id="CHEBI:29105"/>
        <note>catalytic</note>
    </ligand>
</feature>
<feature type="site" description="Transition state stabilizer" evidence="2">
    <location>
        <position position="162"/>
    </location>
</feature>